<organism>
    <name type="scientific">Arabidopsis thaliana</name>
    <name type="common">Mouse-ear cress</name>
    <dbReference type="NCBI Taxonomy" id="3702"/>
    <lineage>
        <taxon>Eukaryota</taxon>
        <taxon>Viridiplantae</taxon>
        <taxon>Streptophyta</taxon>
        <taxon>Embryophyta</taxon>
        <taxon>Tracheophyta</taxon>
        <taxon>Spermatophyta</taxon>
        <taxon>Magnoliopsida</taxon>
        <taxon>eudicotyledons</taxon>
        <taxon>Gunneridae</taxon>
        <taxon>Pentapetalae</taxon>
        <taxon>rosids</taxon>
        <taxon>malvids</taxon>
        <taxon>Brassicales</taxon>
        <taxon>Brassicaceae</taxon>
        <taxon>Camelineae</taxon>
        <taxon>Arabidopsis</taxon>
    </lineage>
</organism>
<sequence length="351" mass="39134">MKQRTWPCRSEGSRFSSLSFLKPHDKDKRSRISSINKATAKSTTSSRSSSSSSSSRPPSNEFGDFSMLPYDILMKIAAPFSHPNLQAASLVCKSWRDALKPLRESMLLIRWGKKYKHGRGGVRANLDKALDSFLKGAMRGSTLAMVDAGLVYWERGEKEKAVNLYRRASELGDAVGQCNLGIAYLQVQPSNPKEAMKWLKQSAENGYVRAQYQLALCLHHGRVVQTNLLEATKWYLKAAEGGYVRAMYNISLCYSVGEGLPQNRKLARKWMKRAADHGHSKAQFEHGLALFSEGEMLKSVLYLELAERGGEAAATPVKEVVHQQLSATFGGQAVHHAIHQANNWRPLPVTR</sequence>
<name>FB84_ARATH</name>
<proteinExistence type="evidence at transcript level"/>
<feature type="chain" id="PRO_0000283357" description="F-box protein At1g70590">
    <location>
        <begin position="1"/>
        <end position="351"/>
    </location>
</feature>
<feature type="domain" description="F-box">
    <location>
        <begin position="62"/>
        <end position="111"/>
    </location>
</feature>
<feature type="repeat" description="Sel1-like">
    <location>
        <begin position="105"/>
        <end position="141"/>
    </location>
</feature>
<feature type="repeat" description="TPR">
    <location>
        <begin position="142"/>
        <end position="175"/>
    </location>
</feature>
<feature type="region of interest" description="Disordered" evidence="1">
    <location>
        <begin position="1"/>
        <end position="60"/>
    </location>
</feature>
<feature type="compositionally biased region" description="Polar residues" evidence="1">
    <location>
        <begin position="32"/>
        <end position="41"/>
    </location>
</feature>
<feature type="compositionally biased region" description="Low complexity" evidence="1">
    <location>
        <begin position="42"/>
        <end position="59"/>
    </location>
</feature>
<reference key="1">
    <citation type="journal article" date="2000" name="Nature">
        <title>Sequence and analysis of chromosome 1 of the plant Arabidopsis thaliana.</title>
        <authorList>
            <person name="Theologis A."/>
            <person name="Ecker J.R."/>
            <person name="Palm C.J."/>
            <person name="Federspiel N.A."/>
            <person name="Kaul S."/>
            <person name="White O."/>
            <person name="Alonso J."/>
            <person name="Altafi H."/>
            <person name="Araujo R."/>
            <person name="Bowman C.L."/>
            <person name="Brooks S.Y."/>
            <person name="Buehler E."/>
            <person name="Chan A."/>
            <person name="Chao Q."/>
            <person name="Chen H."/>
            <person name="Cheuk R.F."/>
            <person name="Chin C.W."/>
            <person name="Chung M.K."/>
            <person name="Conn L."/>
            <person name="Conway A.B."/>
            <person name="Conway A.R."/>
            <person name="Creasy T.H."/>
            <person name="Dewar K."/>
            <person name="Dunn P."/>
            <person name="Etgu P."/>
            <person name="Feldblyum T.V."/>
            <person name="Feng J.-D."/>
            <person name="Fong B."/>
            <person name="Fujii C.Y."/>
            <person name="Gill J.E."/>
            <person name="Goldsmith A.D."/>
            <person name="Haas B."/>
            <person name="Hansen N.F."/>
            <person name="Hughes B."/>
            <person name="Huizar L."/>
            <person name="Hunter J.L."/>
            <person name="Jenkins J."/>
            <person name="Johnson-Hopson C."/>
            <person name="Khan S."/>
            <person name="Khaykin E."/>
            <person name="Kim C.J."/>
            <person name="Koo H.L."/>
            <person name="Kremenetskaia I."/>
            <person name="Kurtz D.B."/>
            <person name="Kwan A."/>
            <person name="Lam B."/>
            <person name="Langin-Hooper S."/>
            <person name="Lee A."/>
            <person name="Lee J.M."/>
            <person name="Lenz C.A."/>
            <person name="Li J.H."/>
            <person name="Li Y.-P."/>
            <person name="Lin X."/>
            <person name="Liu S.X."/>
            <person name="Liu Z.A."/>
            <person name="Luros J.S."/>
            <person name="Maiti R."/>
            <person name="Marziali A."/>
            <person name="Militscher J."/>
            <person name="Miranda M."/>
            <person name="Nguyen M."/>
            <person name="Nierman W.C."/>
            <person name="Osborne B.I."/>
            <person name="Pai G."/>
            <person name="Peterson J."/>
            <person name="Pham P.K."/>
            <person name="Rizzo M."/>
            <person name="Rooney T."/>
            <person name="Rowley D."/>
            <person name="Sakano H."/>
            <person name="Salzberg S.L."/>
            <person name="Schwartz J.R."/>
            <person name="Shinn P."/>
            <person name="Southwick A.M."/>
            <person name="Sun H."/>
            <person name="Tallon L.J."/>
            <person name="Tambunga G."/>
            <person name="Toriumi M.J."/>
            <person name="Town C.D."/>
            <person name="Utterback T."/>
            <person name="Van Aken S."/>
            <person name="Vaysberg M."/>
            <person name="Vysotskaia V.S."/>
            <person name="Walker M."/>
            <person name="Wu D."/>
            <person name="Yu G."/>
            <person name="Fraser C.M."/>
            <person name="Venter J.C."/>
            <person name="Davis R.W."/>
        </authorList>
    </citation>
    <scope>NUCLEOTIDE SEQUENCE [LARGE SCALE GENOMIC DNA]</scope>
    <source>
        <strain>cv. Columbia</strain>
    </source>
</reference>
<reference key="2">
    <citation type="journal article" date="2017" name="Plant J.">
        <title>Araport11: a complete reannotation of the Arabidopsis thaliana reference genome.</title>
        <authorList>
            <person name="Cheng C.Y."/>
            <person name="Krishnakumar V."/>
            <person name="Chan A.P."/>
            <person name="Thibaud-Nissen F."/>
            <person name="Schobel S."/>
            <person name="Town C.D."/>
        </authorList>
    </citation>
    <scope>GENOME REANNOTATION</scope>
    <source>
        <strain>cv. Columbia</strain>
    </source>
</reference>
<reference key="3">
    <citation type="journal article" date="2003" name="Science">
        <title>Empirical analysis of transcriptional activity in the Arabidopsis genome.</title>
        <authorList>
            <person name="Yamada K."/>
            <person name="Lim J."/>
            <person name="Dale J.M."/>
            <person name="Chen H."/>
            <person name="Shinn P."/>
            <person name="Palm C.J."/>
            <person name="Southwick A.M."/>
            <person name="Wu H.C."/>
            <person name="Kim C.J."/>
            <person name="Nguyen M."/>
            <person name="Pham P.K."/>
            <person name="Cheuk R.F."/>
            <person name="Karlin-Newmann G."/>
            <person name="Liu S.X."/>
            <person name="Lam B."/>
            <person name="Sakano H."/>
            <person name="Wu T."/>
            <person name="Yu G."/>
            <person name="Miranda M."/>
            <person name="Quach H.L."/>
            <person name="Tripp M."/>
            <person name="Chang C.H."/>
            <person name="Lee J.M."/>
            <person name="Toriumi M.J."/>
            <person name="Chan M.M."/>
            <person name="Tang C.C."/>
            <person name="Onodera C.S."/>
            <person name="Deng J.M."/>
            <person name="Akiyama K."/>
            <person name="Ansari Y."/>
            <person name="Arakawa T."/>
            <person name="Banh J."/>
            <person name="Banno F."/>
            <person name="Bowser L."/>
            <person name="Brooks S.Y."/>
            <person name="Carninci P."/>
            <person name="Chao Q."/>
            <person name="Choy N."/>
            <person name="Enju A."/>
            <person name="Goldsmith A.D."/>
            <person name="Gurjal M."/>
            <person name="Hansen N.F."/>
            <person name="Hayashizaki Y."/>
            <person name="Johnson-Hopson C."/>
            <person name="Hsuan V.W."/>
            <person name="Iida K."/>
            <person name="Karnes M."/>
            <person name="Khan S."/>
            <person name="Koesema E."/>
            <person name="Ishida J."/>
            <person name="Jiang P.X."/>
            <person name="Jones T."/>
            <person name="Kawai J."/>
            <person name="Kamiya A."/>
            <person name="Meyers C."/>
            <person name="Nakajima M."/>
            <person name="Narusaka M."/>
            <person name="Seki M."/>
            <person name="Sakurai T."/>
            <person name="Satou M."/>
            <person name="Tamse R."/>
            <person name="Vaysberg M."/>
            <person name="Wallender E.K."/>
            <person name="Wong C."/>
            <person name="Yamamura Y."/>
            <person name="Yuan S."/>
            <person name="Shinozaki K."/>
            <person name="Davis R.W."/>
            <person name="Theologis A."/>
            <person name="Ecker J.R."/>
        </authorList>
    </citation>
    <scope>NUCLEOTIDE SEQUENCE [LARGE SCALE MRNA]</scope>
    <source>
        <strain>cv. Columbia</strain>
    </source>
</reference>
<gene>
    <name type="ordered locus">At1g70590</name>
    <name type="ORF">F24J13.16</name>
    <name type="ORF">F5A18.23</name>
</gene>
<keyword id="KW-1185">Reference proteome</keyword>
<keyword id="KW-0802">TPR repeat</keyword>
<accession>Q94C27</accession>
<accession>Q9S730</accession>
<comment type="sequence caution" evidence="2">
    <conflict type="erroneous gene model prediction">
        <sequence resource="EMBL-CDS" id="AAG52341"/>
    </conflict>
</comment>
<comment type="sequence caution" evidence="2">
    <conflict type="erroneous gene model prediction">
        <sequence resource="EMBL-CDS" id="AAG52462"/>
    </conflict>
</comment>
<evidence type="ECO:0000256" key="1">
    <source>
        <dbReference type="SAM" id="MobiDB-lite"/>
    </source>
</evidence>
<evidence type="ECO:0000305" key="2"/>
<protein>
    <recommendedName>
        <fullName>F-box protein At1g70590</fullName>
    </recommendedName>
</protein>
<dbReference type="EMBL" id="AC010796">
    <property type="protein sequence ID" value="AAG52462.1"/>
    <property type="status" value="ALT_SEQ"/>
    <property type="molecule type" value="Genomic_DNA"/>
</dbReference>
<dbReference type="EMBL" id="AC011663">
    <property type="protein sequence ID" value="AAG52341.1"/>
    <property type="status" value="ALT_SEQ"/>
    <property type="molecule type" value="Genomic_DNA"/>
</dbReference>
<dbReference type="EMBL" id="CP002684">
    <property type="protein sequence ID" value="AEE35086.1"/>
    <property type="molecule type" value="Genomic_DNA"/>
</dbReference>
<dbReference type="EMBL" id="AY037204">
    <property type="protein sequence ID" value="AAK59789.1"/>
    <property type="molecule type" value="mRNA"/>
</dbReference>
<dbReference type="EMBL" id="BT002677">
    <property type="protein sequence ID" value="AAO11593.1"/>
    <property type="molecule type" value="mRNA"/>
</dbReference>
<dbReference type="PIR" id="A96730">
    <property type="entry name" value="A96730"/>
</dbReference>
<dbReference type="RefSeq" id="NP_564992.1">
    <property type="nucleotide sequence ID" value="NM_105727.4"/>
</dbReference>
<dbReference type="SMR" id="Q94C27"/>
<dbReference type="BioGRID" id="28616">
    <property type="interactions" value="13"/>
</dbReference>
<dbReference type="FunCoup" id="Q94C27">
    <property type="interactions" value="1149"/>
</dbReference>
<dbReference type="IntAct" id="Q94C27">
    <property type="interactions" value="1"/>
</dbReference>
<dbReference type="STRING" id="3702.Q94C27"/>
<dbReference type="iPTMnet" id="Q94C27"/>
<dbReference type="PaxDb" id="3702-AT1G70590.1"/>
<dbReference type="EnsemblPlants" id="AT1G70590.1">
    <property type="protein sequence ID" value="AT1G70590.1"/>
    <property type="gene ID" value="AT1G70590"/>
</dbReference>
<dbReference type="GeneID" id="843396"/>
<dbReference type="Gramene" id="AT1G70590.1">
    <property type="protein sequence ID" value="AT1G70590.1"/>
    <property type="gene ID" value="AT1G70590"/>
</dbReference>
<dbReference type="KEGG" id="ath:AT1G70590"/>
<dbReference type="Araport" id="AT1G70590"/>
<dbReference type="TAIR" id="AT1G70590"/>
<dbReference type="eggNOG" id="KOG1550">
    <property type="taxonomic scope" value="Eukaryota"/>
</dbReference>
<dbReference type="HOGENOM" id="CLU_073713_0_0_1"/>
<dbReference type="InParanoid" id="Q94C27"/>
<dbReference type="OMA" id="VMLLADN"/>
<dbReference type="PhylomeDB" id="Q94C27"/>
<dbReference type="PRO" id="PR:Q94C27"/>
<dbReference type="Proteomes" id="UP000006548">
    <property type="component" value="Chromosome 1"/>
</dbReference>
<dbReference type="ExpressionAtlas" id="Q94C27">
    <property type="expression patterns" value="baseline and differential"/>
</dbReference>
<dbReference type="CDD" id="cd09917">
    <property type="entry name" value="F-box_SF"/>
    <property type="match status" value="1"/>
</dbReference>
<dbReference type="Gene3D" id="1.20.1280.50">
    <property type="match status" value="1"/>
</dbReference>
<dbReference type="Gene3D" id="1.25.40.10">
    <property type="entry name" value="Tetratricopeptide repeat domain"/>
    <property type="match status" value="2"/>
</dbReference>
<dbReference type="InterPro" id="IPR036047">
    <property type="entry name" value="F-box-like_dom_sf"/>
</dbReference>
<dbReference type="InterPro" id="IPR001810">
    <property type="entry name" value="F-box_dom"/>
</dbReference>
<dbReference type="InterPro" id="IPR053301">
    <property type="entry name" value="F-box_motif"/>
</dbReference>
<dbReference type="InterPro" id="IPR006597">
    <property type="entry name" value="Sel1-like"/>
</dbReference>
<dbReference type="InterPro" id="IPR011990">
    <property type="entry name" value="TPR-like_helical_dom_sf"/>
</dbReference>
<dbReference type="PANTHER" id="PTHR45088:SF1">
    <property type="entry name" value="OS04G0476000 PROTEIN"/>
    <property type="match status" value="1"/>
</dbReference>
<dbReference type="PANTHER" id="PTHR45088">
    <property type="entry name" value="OSJNBA0022H21.17 PROTEIN"/>
    <property type="match status" value="1"/>
</dbReference>
<dbReference type="Pfam" id="PF00646">
    <property type="entry name" value="F-box"/>
    <property type="match status" value="1"/>
</dbReference>
<dbReference type="Pfam" id="PF08238">
    <property type="entry name" value="Sel1"/>
    <property type="match status" value="5"/>
</dbReference>
<dbReference type="SMART" id="SM00671">
    <property type="entry name" value="SEL1"/>
    <property type="match status" value="5"/>
</dbReference>
<dbReference type="SUPFAM" id="SSF81383">
    <property type="entry name" value="F-box domain"/>
    <property type="match status" value="1"/>
</dbReference>
<dbReference type="SUPFAM" id="SSF81901">
    <property type="entry name" value="HCP-like"/>
    <property type="match status" value="1"/>
</dbReference>
<dbReference type="PROSITE" id="PS50293">
    <property type="entry name" value="TPR_REGION"/>
    <property type="match status" value="1"/>
</dbReference>